<protein>
    <recommendedName>
        <fullName evidence="1">Transcription elongation factor GreB</fullName>
    </recommendedName>
    <alternativeName>
        <fullName evidence="1">Transcript cleavage factor GreB</fullName>
    </alternativeName>
</protein>
<evidence type="ECO:0000255" key="1">
    <source>
        <dbReference type="HAMAP-Rule" id="MF_00930"/>
    </source>
</evidence>
<comment type="function">
    <text evidence="1">Necessary for efficient RNA polymerase transcription elongation past template-encoded arresting sites. The arresting sites in DNA have the property of trapping a certain fraction of elongating RNA polymerases that pass through, resulting in locked ternary complexes. Cleavage of the nascent transcript by cleavage factors such as GreA or GreB allows the resumption of elongation from the new 3'terminus. GreB releases sequences of up to 9 nucleotides in length.</text>
</comment>
<comment type="similarity">
    <text evidence="1">Belongs to the GreA/GreB family. GreB subfamily.</text>
</comment>
<sequence length="162" mass="18913">MAKSNYITRAGWQALDQELKYLWKEERPKVTQSVSEAAALGDRSENAEYIYGKRRLREIDRRIRFLSKRLEALQIIDYHPQQAGKVFFGAWIELENNEGEINQYRIVGCDEFDPTKNWISIDSPVARALIGKCVDDEIEVQTPTGKAVFYINKIWYDTKSLY</sequence>
<proteinExistence type="inferred from homology"/>
<feature type="chain" id="PRO_0000176929" description="Transcription elongation factor GreB">
    <location>
        <begin position="1"/>
        <end position="162"/>
    </location>
</feature>
<feature type="coiled-coil region" evidence="1">
    <location>
        <begin position="52"/>
        <end position="76"/>
    </location>
</feature>
<dbReference type="EMBL" id="AE017143">
    <property type="protein sequence ID" value="AAP96021.1"/>
    <property type="molecule type" value="Genomic_DNA"/>
</dbReference>
<dbReference type="RefSeq" id="WP_010945070.1">
    <property type="nucleotide sequence ID" value="NC_002940.2"/>
</dbReference>
<dbReference type="SMR" id="Q7VM42"/>
<dbReference type="STRING" id="233412.HD_1167"/>
<dbReference type="KEGG" id="hdu:HD_1167"/>
<dbReference type="eggNOG" id="COG0782">
    <property type="taxonomic scope" value="Bacteria"/>
</dbReference>
<dbReference type="HOGENOM" id="CLU_101379_3_0_6"/>
<dbReference type="OrthoDB" id="5511940at2"/>
<dbReference type="Proteomes" id="UP000001022">
    <property type="component" value="Chromosome"/>
</dbReference>
<dbReference type="GO" id="GO:0003677">
    <property type="term" value="F:DNA binding"/>
    <property type="evidence" value="ECO:0007669"/>
    <property type="project" value="UniProtKB-UniRule"/>
</dbReference>
<dbReference type="GO" id="GO:0070063">
    <property type="term" value="F:RNA polymerase binding"/>
    <property type="evidence" value="ECO:0007669"/>
    <property type="project" value="InterPro"/>
</dbReference>
<dbReference type="GO" id="GO:0006354">
    <property type="term" value="P:DNA-templated transcription elongation"/>
    <property type="evidence" value="ECO:0007669"/>
    <property type="project" value="TreeGrafter"/>
</dbReference>
<dbReference type="GO" id="GO:0032784">
    <property type="term" value="P:regulation of DNA-templated transcription elongation"/>
    <property type="evidence" value="ECO:0007669"/>
    <property type="project" value="UniProtKB-UniRule"/>
</dbReference>
<dbReference type="FunFam" id="1.10.287.180:FF:000001">
    <property type="entry name" value="Transcription elongation factor GreA"/>
    <property type="match status" value="1"/>
</dbReference>
<dbReference type="FunFam" id="3.10.50.30:FF:000001">
    <property type="entry name" value="Transcription elongation factor GreA"/>
    <property type="match status" value="1"/>
</dbReference>
<dbReference type="Gene3D" id="3.10.50.30">
    <property type="entry name" value="Transcription elongation factor, GreA/GreB, C-terminal domain"/>
    <property type="match status" value="1"/>
</dbReference>
<dbReference type="Gene3D" id="1.10.287.180">
    <property type="entry name" value="Transcription elongation factor, GreA/GreB, N-terminal domain"/>
    <property type="match status" value="1"/>
</dbReference>
<dbReference type="HAMAP" id="MF_00105">
    <property type="entry name" value="GreA_GreB"/>
    <property type="match status" value="1"/>
</dbReference>
<dbReference type="HAMAP" id="MF_00930">
    <property type="entry name" value="GreB"/>
    <property type="match status" value="1"/>
</dbReference>
<dbReference type="InterPro" id="IPR036953">
    <property type="entry name" value="GreA/GreB_C_sf"/>
</dbReference>
<dbReference type="InterPro" id="IPR018151">
    <property type="entry name" value="TF_GreA/GreB_CS"/>
</dbReference>
<dbReference type="InterPro" id="IPR028624">
    <property type="entry name" value="Tscrpt_elong_fac_GreA/B"/>
</dbReference>
<dbReference type="InterPro" id="IPR001437">
    <property type="entry name" value="Tscrpt_elong_fac_GreA/B_C"/>
</dbReference>
<dbReference type="InterPro" id="IPR023459">
    <property type="entry name" value="Tscrpt_elong_fac_GreA/B_fam"/>
</dbReference>
<dbReference type="InterPro" id="IPR022691">
    <property type="entry name" value="Tscrpt_elong_fac_GreA/B_N"/>
</dbReference>
<dbReference type="InterPro" id="IPR036805">
    <property type="entry name" value="Tscrpt_elong_fac_GreA/B_N_sf"/>
</dbReference>
<dbReference type="InterPro" id="IPR006358">
    <property type="entry name" value="Tscrpt_elong_fac_GreB"/>
</dbReference>
<dbReference type="NCBIfam" id="TIGR01461">
    <property type="entry name" value="greB"/>
    <property type="match status" value="1"/>
</dbReference>
<dbReference type="NCBIfam" id="NF002506">
    <property type="entry name" value="PRK01885.1"/>
    <property type="match status" value="1"/>
</dbReference>
<dbReference type="PANTHER" id="PTHR30437">
    <property type="entry name" value="TRANSCRIPTION ELONGATION FACTOR GREA"/>
    <property type="match status" value="1"/>
</dbReference>
<dbReference type="PANTHER" id="PTHR30437:SF6">
    <property type="entry name" value="TRANSCRIPTION ELONGATION FACTOR GREB"/>
    <property type="match status" value="1"/>
</dbReference>
<dbReference type="Pfam" id="PF01272">
    <property type="entry name" value="GreA_GreB"/>
    <property type="match status" value="1"/>
</dbReference>
<dbReference type="Pfam" id="PF03449">
    <property type="entry name" value="GreA_GreB_N"/>
    <property type="match status" value="1"/>
</dbReference>
<dbReference type="PIRSF" id="PIRSF006092">
    <property type="entry name" value="GreA_GreB"/>
    <property type="match status" value="1"/>
</dbReference>
<dbReference type="SUPFAM" id="SSF54534">
    <property type="entry name" value="FKBP-like"/>
    <property type="match status" value="1"/>
</dbReference>
<dbReference type="SUPFAM" id="SSF46557">
    <property type="entry name" value="GreA transcript cleavage protein, N-terminal domain"/>
    <property type="match status" value="1"/>
</dbReference>
<dbReference type="PROSITE" id="PS00829">
    <property type="entry name" value="GREAB_1"/>
    <property type="match status" value="1"/>
</dbReference>
<dbReference type="PROSITE" id="PS00830">
    <property type="entry name" value="GREAB_2"/>
    <property type="match status" value="1"/>
</dbReference>
<organism>
    <name type="scientific">Haemophilus ducreyi (strain 35000HP / ATCC 700724)</name>
    <dbReference type="NCBI Taxonomy" id="233412"/>
    <lineage>
        <taxon>Bacteria</taxon>
        <taxon>Pseudomonadati</taxon>
        <taxon>Pseudomonadota</taxon>
        <taxon>Gammaproteobacteria</taxon>
        <taxon>Pasteurellales</taxon>
        <taxon>Pasteurellaceae</taxon>
        <taxon>Haemophilus</taxon>
    </lineage>
</organism>
<accession>Q7VM42</accession>
<name>GREB_HAEDU</name>
<keyword id="KW-0175">Coiled coil</keyword>
<keyword id="KW-0238">DNA-binding</keyword>
<keyword id="KW-1185">Reference proteome</keyword>
<keyword id="KW-0804">Transcription</keyword>
<keyword id="KW-0805">Transcription regulation</keyword>
<gene>
    <name evidence="1" type="primary">greB</name>
    <name type="ordered locus">HD_1167</name>
</gene>
<reference key="1">
    <citation type="submission" date="2003-06" db="EMBL/GenBank/DDBJ databases">
        <title>The complete genome sequence of Haemophilus ducreyi.</title>
        <authorList>
            <person name="Munson R.S. Jr."/>
            <person name="Ray W.C."/>
            <person name="Mahairas G."/>
            <person name="Sabo P."/>
            <person name="Mungur R."/>
            <person name="Johnson L."/>
            <person name="Nguyen D."/>
            <person name="Wang J."/>
            <person name="Forst C."/>
            <person name="Hood L."/>
        </authorList>
    </citation>
    <scope>NUCLEOTIDE SEQUENCE [LARGE SCALE GENOMIC DNA]</scope>
    <source>
        <strain>35000HP / ATCC 700724</strain>
    </source>
</reference>